<comment type="function">
    <text evidence="1">Stimulates smooth muscle contraction. Role in induction of hypothermia, stimulation of DNA replication and release of many gastrointestinal hormones (By similarity).</text>
</comment>
<comment type="subcellular location">
    <subcellularLocation>
        <location evidence="2">Secreted</location>
    </subcellularLocation>
</comment>
<comment type="tissue specificity">
    <text evidence="2">Expressed by the skin glands.</text>
</comment>
<comment type="similarity">
    <text evidence="3">Belongs to the bombesin/neuromedin-B/ranatensin family.</text>
</comment>
<protein>
    <recommendedName>
        <fullName>Bombesin</fullName>
    </recommendedName>
</protein>
<keyword id="KW-0027">Amidation</keyword>
<keyword id="KW-0878">Amphibian defense peptide</keyword>
<keyword id="KW-0903">Direct protein sequencing</keyword>
<keyword id="KW-0873">Pyrrolidone carboxylic acid</keyword>
<keyword id="KW-0964">Secreted</keyword>
<proteinExistence type="evidence at protein level"/>
<feature type="peptide" id="PRO_0000043488" description="Bombesin">
    <location>
        <begin position="1"/>
        <end position="14"/>
    </location>
</feature>
<feature type="modified residue" description="Pyrrolidone carboxylic acid" evidence="1">
    <location>
        <position position="1"/>
    </location>
</feature>
<feature type="modified residue" description="Methionine amide" evidence="1">
    <location>
        <position position="14"/>
    </location>
</feature>
<dbReference type="PIR" id="A01564">
    <property type="entry name" value="BSTD"/>
</dbReference>
<dbReference type="GO" id="GO:0005576">
    <property type="term" value="C:extracellular region"/>
    <property type="evidence" value="ECO:0000314"/>
    <property type="project" value="UniProtKB"/>
</dbReference>
<dbReference type="GO" id="GO:0006952">
    <property type="term" value="P:defense response"/>
    <property type="evidence" value="ECO:0007669"/>
    <property type="project" value="UniProtKB-KW"/>
</dbReference>
<dbReference type="GO" id="GO:0007218">
    <property type="term" value="P:neuropeptide signaling pathway"/>
    <property type="evidence" value="ECO:0007669"/>
    <property type="project" value="InterPro"/>
</dbReference>
<dbReference type="GO" id="GO:0050796">
    <property type="term" value="P:regulation of insulin secretion"/>
    <property type="evidence" value="ECO:0000250"/>
    <property type="project" value="UniProtKB"/>
</dbReference>
<dbReference type="InterPro" id="IPR000874">
    <property type="entry name" value="Bombesin"/>
</dbReference>
<dbReference type="Pfam" id="PF02044">
    <property type="entry name" value="Bombesin"/>
    <property type="match status" value="1"/>
</dbReference>
<dbReference type="PROSITE" id="PS00257">
    <property type="entry name" value="BOMBESIN"/>
    <property type="match status" value="1"/>
</dbReference>
<evidence type="ECO:0000250" key="1"/>
<evidence type="ECO:0000269" key="2">
    <source>
    </source>
</evidence>
<evidence type="ECO:0000305" key="3"/>
<organism>
    <name type="scientific">Bombina bombina</name>
    <name type="common">Fire-bellied toad</name>
    <dbReference type="NCBI Taxonomy" id="8345"/>
    <lineage>
        <taxon>Eukaryota</taxon>
        <taxon>Metazoa</taxon>
        <taxon>Chordata</taxon>
        <taxon>Craniata</taxon>
        <taxon>Vertebrata</taxon>
        <taxon>Euteleostomi</taxon>
        <taxon>Amphibia</taxon>
        <taxon>Batrachia</taxon>
        <taxon>Anura</taxon>
        <taxon>Bombinatoridae</taxon>
        <taxon>Bombina</taxon>
    </lineage>
</organism>
<sequence>QQRLGNQWAVGHLM</sequence>
<accession>P84214</accession>
<accession>P01296</accession>
<reference key="1">
    <citation type="journal article" date="1972" name="Arch. Biochem. Biophys.">
        <title>Isolation and amino acid sequences of alytesin and bombesin, two analogous active tetradecapeptides from the skin of European discoglossid frogs.</title>
        <authorList>
            <person name="Anastasi A."/>
            <person name="Erspamer V."/>
            <person name="Bucci M."/>
        </authorList>
    </citation>
    <scope>PROTEIN SEQUENCE</scope>
    <scope>SUBCELLULAR LOCATION</scope>
    <scope>TISSUE SPECIFICITY</scope>
    <source>
        <tissue>Skin secretion</tissue>
    </source>
</reference>
<name>BOMB_BOMBO</name>